<evidence type="ECO:0000250" key="1">
    <source>
        <dbReference type="UniProtKB" id="P16580"/>
    </source>
</evidence>
<evidence type="ECO:0000255" key="2">
    <source>
        <dbReference type="PROSITE-ProRule" id="PRU01330"/>
    </source>
</evidence>
<evidence type="ECO:0000255" key="3">
    <source>
        <dbReference type="PROSITE-ProRule" id="PRU01331"/>
    </source>
</evidence>
<evidence type="ECO:0000269" key="4">
    <source>
    </source>
</evidence>
<evidence type="ECO:0000269" key="5">
    <source>
    </source>
</evidence>
<evidence type="ECO:0000269" key="6">
    <source>
    </source>
</evidence>
<evidence type="ECO:0000269" key="7">
    <source>
    </source>
</evidence>
<evidence type="ECO:0000269" key="8">
    <source>
    </source>
</evidence>
<evidence type="ECO:0000269" key="9">
    <source>
    </source>
</evidence>
<evidence type="ECO:0000269" key="10">
    <source>
    </source>
</evidence>
<evidence type="ECO:0000303" key="11">
    <source>
    </source>
</evidence>
<evidence type="ECO:0000303" key="12">
    <source>
    </source>
</evidence>
<evidence type="ECO:0000305" key="13"/>
<evidence type="ECO:0000305" key="14">
    <source>
    </source>
</evidence>
<evidence type="ECO:0000312" key="15">
    <source>
        <dbReference type="EMBL" id="AAN05339.1"/>
    </source>
</evidence>
<evidence type="ECO:0000312" key="16">
    <source>
        <dbReference type="EMBL" id="ABF94717.1"/>
    </source>
</evidence>
<evidence type="ECO:0000312" key="17">
    <source>
        <dbReference type="EMBL" id="BAD77931.1"/>
    </source>
</evidence>
<evidence type="ECO:0000312" key="18">
    <source>
        <dbReference type="EMBL" id="BAS83037.1"/>
    </source>
</evidence>
<evidence type="ECO:0000312" key="19">
    <source>
        <dbReference type="EMBL" id="EEE58620.1"/>
    </source>
</evidence>
<comment type="function">
    <text evidence="7 8 9 10 14">High-affinity glutamine synthetase involved in ammonium assimilation (Probable). Plays an important role in the primary assimilation of ammonium taken up by roots (PubMed:23509111). Plays a role in maintaining nitrogen metabolic balance during ammonium assimilation, thus controlling plant growth and development (PubMed:24743556). Reassimilates ammonium generated during lignification within developing tillers, which is probably required for the outgrowth of axillary buds (PubMed:25429996). Required for nitrogen-dependent biosynthesis of cytokinin (PubMed:28186255). Active cytokinin in axillary bud meristem is required for axillary bud outgrowth and necessary for tillering (PubMed:28186255).</text>
</comment>
<comment type="catalytic activity">
    <reaction evidence="4">
        <text>L-glutamate + NH4(+) + ATP = L-glutamine + ADP + phosphate + H(+)</text>
        <dbReference type="Rhea" id="RHEA:16169"/>
        <dbReference type="ChEBI" id="CHEBI:15378"/>
        <dbReference type="ChEBI" id="CHEBI:28938"/>
        <dbReference type="ChEBI" id="CHEBI:29985"/>
        <dbReference type="ChEBI" id="CHEBI:30616"/>
        <dbReference type="ChEBI" id="CHEBI:43474"/>
        <dbReference type="ChEBI" id="CHEBI:58359"/>
        <dbReference type="ChEBI" id="CHEBI:456216"/>
        <dbReference type="EC" id="6.3.1.2"/>
    </reaction>
    <physiologicalReaction direction="left-to-right" evidence="4">
        <dbReference type="Rhea" id="RHEA:16170"/>
    </physiologicalReaction>
</comment>
<comment type="biophysicochemical properties">
    <kinetics>
        <KM evidence="4">2.1 mM for glutamate</KM>
        <KM evidence="4">73 uM for ammonium</KM>
        <KM evidence="4">530 uM for ATP</KM>
        <Vmax evidence="4">94.7 nmol/sec/mg enzyme with glutamate as substrate</Vmax>
        <Vmax evidence="4">98.1 nmol/sec/mg enzyme with ammonium as substrate</Vmax>
        <Vmax evidence="4">109.1 nmol/sec/mg enzyme with ATP as substrate</Vmax>
        <text evidence="4">Measured at pH 7.8 and 30 degrees Celsius for all experiments.</text>
    </kinetics>
</comment>
<comment type="subunit">
    <text evidence="1">Homooctamer.</text>
</comment>
<comment type="subcellular location">
    <subcellularLocation>
        <location evidence="13">Cytoplasm</location>
    </subcellularLocation>
</comment>
<comment type="tissue specificity">
    <text evidence="4 5">Expressed in roots and at lower levels in leaf blades and spikelets (rice flower).</text>
</comment>
<comment type="induction">
    <text evidence="4 6">Induced in roots by ammonium supply.</text>
</comment>
<comment type="disruption phenotype">
    <text evidence="7">Reduced number of tillers and panicles.</text>
</comment>
<comment type="miscellaneous">
    <text evidence="8">Plants overexpressing GLN1-2 exhibit a poor plant growth phenotype and yield, and decreased carbon/nitrogen ratio in the stem caused by the accumulation of nitrogen in the stem.</text>
</comment>
<comment type="similarity">
    <text evidence="13">Belongs to the glutamine synthetase family.</text>
</comment>
<comment type="sequence caution" evidence="13">
    <conflict type="erroneous gene model prediction">
        <sequence resource="EMBL-CDS" id="AAN05339"/>
    </conflict>
</comment>
<accession>P14654</accession>
<accession>Q10PS4</accession>
<accession>Q5NU22</accession>
<accession>Q8GTZ3</accession>
<keyword id="KW-0067">ATP-binding</keyword>
<keyword id="KW-0963">Cytoplasm</keyword>
<keyword id="KW-0436">Ligase</keyword>
<keyword id="KW-0547">Nucleotide-binding</keyword>
<keyword id="KW-1185">Reference proteome</keyword>
<protein>
    <recommendedName>
        <fullName evidence="13">Glutamine synthetase cytosolic isozyme 1-2</fullName>
        <ecNumber evidence="4">6.3.1.2</ecNumber>
    </recommendedName>
    <alternativeName>
        <fullName evidence="13">Glutamate--ammonia ligase GLN1;2</fullName>
        <shortName evidence="11">OsGLN1;2</shortName>
    </alternativeName>
    <alternativeName>
        <fullName evidence="13">Glutamine synthetase root isozyme</fullName>
    </alternativeName>
    <alternativeName>
        <fullName evidence="17">OsGS1;2</fullName>
    </alternativeName>
</protein>
<name>GLN12_ORYSJ</name>
<reference key="1">
    <citation type="journal article" date="1989" name="Plant Mol. Biol.">
        <title>Three cDNA sequences coding for glutamine synthetase polypeptides in Oryza sativa L.</title>
        <authorList>
            <person name="Sakamoto A."/>
            <person name="Ogawa M."/>
            <person name="Masumura T."/>
            <person name="Shibata D."/>
            <person name="Takeba G."/>
            <person name="Tanaka K."/>
            <person name="Fujii S."/>
        </authorList>
    </citation>
    <scope>NUCLEOTIDE SEQUENCE [MRNA]</scope>
    <source>
        <strain>cv. Kinmaze</strain>
        <tissue>Root</tissue>
    </source>
</reference>
<reference key="2">
    <citation type="journal article" date="2004" name="Plant Cell Physiol.">
        <title>Biochemical background and compartmentalized functions of cytosolic glutamine synthetase for active ammonium assimilation in rice roots.</title>
        <authorList>
            <person name="Ishiyama K."/>
            <person name="Inoue E."/>
            <person name="Tabuchi M."/>
            <person name="Yamaya T."/>
            <person name="Takahashi H."/>
        </authorList>
    </citation>
    <scope>NUCLEOTIDE SEQUENCE [MRNA]</scope>
    <scope>FUNCTION</scope>
    <scope>CATALYTIC ACTIVITY</scope>
    <scope>BIOPHYSICOCHEMICAL PROPERTIES</scope>
    <scope>TISSUE SPECIFICITY</scope>
    <scope>INDUCTION</scope>
    <source>
        <strain>cv. Sasanishiki</strain>
        <tissue>Root</tissue>
    </source>
</reference>
<reference key="3">
    <citation type="journal article" date="2005" name="Genome Res.">
        <title>Sequence, annotation, and analysis of synteny between rice chromosome 3 and diverged grass species.</title>
        <authorList>
            <consortium name="The rice chromosome 3 sequencing consortium"/>
            <person name="Buell C.R."/>
            <person name="Yuan Q."/>
            <person name="Ouyang S."/>
            <person name="Liu J."/>
            <person name="Zhu W."/>
            <person name="Wang A."/>
            <person name="Maiti R."/>
            <person name="Haas B."/>
            <person name="Wortman J."/>
            <person name="Pertea M."/>
            <person name="Jones K.M."/>
            <person name="Kim M."/>
            <person name="Overton L."/>
            <person name="Tsitrin T."/>
            <person name="Fadrosh D."/>
            <person name="Bera J."/>
            <person name="Weaver B."/>
            <person name="Jin S."/>
            <person name="Johri S."/>
            <person name="Reardon M."/>
            <person name="Webb K."/>
            <person name="Hill J."/>
            <person name="Moffat K."/>
            <person name="Tallon L."/>
            <person name="Van Aken S."/>
            <person name="Lewis M."/>
            <person name="Utterback T."/>
            <person name="Feldblyum T."/>
            <person name="Zismann V."/>
            <person name="Iobst S."/>
            <person name="Hsiao J."/>
            <person name="de Vazeille A.R."/>
            <person name="Salzberg S.L."/>
            <person name="White O."/>
            <person name="Fraser C.M."/>
            <person name="Yu Y."/>
            <person name="Kim H."/>
            <person name="Rambo T."/>
            <person name="Currie J."/>
            <person name="Collura K."/>
            <person name="Kernodle-Thompson S."/>
            <person name="Wei F."/>
            <person name="Kudrna K."/>
            <person name="Ammiraju J.S.S."/>
            <person name="Luo M."/>
            <person name="Goicoechea J.L."/>
            <person name="Wing R.A."/>
            <person name="Henry D."/>
            <person name="Oates R."/>
            <person name="Palmer M."/>
            <person name="Pries G."/>
            <person name="Saski C."/>
            <person name="Simmons J."/>
            <person name="Soderlund C."/>
            <person name="Nelson W."/>
            <person name="de la Bastide M."/>
            <person name="Spiegel L."/>
            <person name="Nascimento L."/>
            <person name="Huang E."/>
            <person name="Preston R."/>
            <person name="Zutavern T."/>
            <person name="Palmer L."/>
            <person name="O'Shaughnessy A."/>
            <person name="Dike S."/>
            <person name="McCombie W.R."/>
            <person name="Minx P."/>
            <person name="Cordum H."/>
            <person name="Wilson R."/>
            <person name="Jin W."/>
            <person name="Lee H.R."/>
            <person name="Jiang J."/>
            <person name="Jackson S."/>
        </authorList>
    </citation>
    <scope>NUCLEOTIDE SEQUENCE [LARGE SCALE GENOMIC DNA]</scope>
    <source>
        <strain>cv. Nipponbare</strain>
    </source>
</reference>
<reference key="4">
    <citation type="journal article" date="2005" name="Nature">
        <title>The map-based sequence of the rice genome.</title>
        <authorList>
            <consortium name="International rice genome sequencing project (IRGSP)"/>
        </authorList>
    </citation>
    <scope>NUCLEOTIDE SEQUENCE [LARGE SCALE GENOMIC DNA]</scope>
    <source>
        <strain>cv. Nipponbare</strain>
    </source>
</reference>
<reference key="5">
    <citation type="journal article" date="2008" name="Nucleic Acids Res.">
        <title>The rice annotation project database (RAP-DB): 2008 update.</title>
        <authorList>
            <consortium name="The rice annotation project (RAP)"/>
        </authorList>
    </citation>
    <scope>GENOME REANNOTATION</scope>
    <source>
        <strain>cv. Nipponbare</strain>
    </source>
</reference>
<reference key="6">
    <citation type="journal article" date="2013" name="Rice">
        <title>Improvement of the Oryza sativa Nipponbare reference genome using next generation sequence and optical map data.</title>
        <authorList>
            <person name="Kawahara Y."/>
            <person name="de la Bastide M."/>
            <person name="Hamilton J.P."/>
            <person name="Kanamori H."/>
            <person name="McCombie W.R."/>
            <person name="Ouyang S."/>
            <person name="Schwartz D.C."/>
            <person name="Tanaka T."/>
            <person name="Wu J."/>
            <person name="Zhou S."/>
            <person name="Childs K.L."/>
            <person name="Davidson R.M."/>
            <person name="Lin H."/>
            <person name="Quesada-Ocampo L."/>
            <person name="Vaillancourt B."/>
            <person name="Sakai H."/>
            <person name="Lee S.S."/>
            <person name="Kim J."/>
            <person name="Numa H."/>
            <person name="Itoh T."/>
            <person name="Buell C.R."/>
            <person name="Matsumoto T."/>
        </authorList>
    </citation>
    <scope>GENOME REANNOTATION</scope>
    <source>
        <strain>cv. Nipponbare</strain>
    </source>
</reference>
<reference key="7">
    <citation type="journal article" date="2005" name="PLoS Biol.">
        <title>The genomes of Oryza sativa: a history of duplications.</title>
        <authorList>
            <person name="Yu J."/>
            <person name="Wang J."/>
            <person name="Lin W."/>
            <person name="Li S."/>
            <person name="Li H."/>
            <person name="Zhou J."/>
            <person name="Ni P."/>
            <person name="Dong W."/>
            <person name="Hu S."/>
            <person name="Zeng C."/>
            <person name="Zhang J."/>
            <person name="Zhang Y."/>
            <person name="Li R."/>
            <person name="Xu Z."/>
            <person name="Li S."/>
            <person name="Li X."/>
            <person name="Zheng H."/>
            <person name="Cong L."/>
            <person name="Lin L."/>
            <person name="Yin J."/>
            <person name="Geng J."/>
            <person name="Li G."/>
            <person name="Shi J."/>
            <person name="Liu J."/>
            <person name="Lv H."/>
            <person name="Li J."/>
            <person name="Wang J."/>
            <person name="Deng Y."/>
            <person name="Ran L."/>
            <person name="Shi X."/>
            <person name="Wang X."/>
            <person name="Wu Q."/>
            <person name="Li C."/>
            <person name="Ren X."/>
            <person name="Wang J."/>
            <person name="Wang X."/>
            <person name="Li D."/>
            <person name="Liu D."/>
            <person name="Zhang X."/>
            <person name="Ji Z."/>
            <person name="Zhao W."/>
            <person name="Sun Y."/>
            <person name="Zhang Z."/>
            <person name="Bao J."/>
            <person name="Han Y."/>
            <person name="Dong L."/>
            <person name="Ji J."/>
            <person name="Chen P."/>
            <person name="Wu S."/>
            <person name="Liu J."/>
            <person name="Xiao Y."/>
            <person name="Bu D."/>
            <person name="Tan J."/>
            <person name="Yang L."/>
            <person name="Ye C."/>
            <person name="Zhang J."/>
            <person name="Xu J."/>
            <person name="Zhou Y."/>
            <person name="Yu Y."/>
            <person name="Zhang B."/>
            <person name="Zhuang S."/>
            <person name="Wei H."/>
            <person name="Liu B."/>
            <person name="Lei M."/>
            <person name="Yu H."/>
            <person name="Li Y."/>
            <person name="Xu H."/>
            <person name="Wei S."/>
            <person name="He X."/>
            <person name="Fang L."/>
            <person name="Zhang Z."/>
            <person name="Zhang Y."/>
            <person name="Huang X."/>
            <person name="Su Z."/>
            <person name="Tong W."/>
            <person name="Li J."/>
            <person name="Tong Z."/>
            <person name="Li S."/>
            <person name="Ye J."/>
            <person name="Wang L."/>
            <person name="Fang L."/>
            <person name="Lei T."/>
            <person name="Chen C.-S."/>
            <person name="Chen H.-C."/>
            <person name="Xu Z."/>
            <person name="Li H."/>
            <person name="Huang H."/>
            <person name="Zhang F."/>
            <person name="Xu H."/>
            <person name="Li N."/>
            <person name="Zhao C."/>
            <person name="Li S."/>
            <person name="Dong L."/>
            <person name="Huang Y."/>
            <person name="Li L."/>
            <person name="Xi Y."/>
            <person name="Qi Q."/>
            <person name="Li W."/>
            <person name="Zhang B."/>
            <person name="Hu W."/>
            <person name="Zhang Y."/>
            <person name="Tian X."/>
            <person name="Jiao Y."/>
            <person name="Liang X."/>
            <person name="Jin J."/>
            <person name="Gao L."/>
            <person name="Zheng W."/>
            <person name="Hao B."/>
            <person name="Liu S.-M."/>
            <person name="Wang W."/>
            <person name="Yuan L."/>
            <person name="Cao M."/>
            <person name="McDermott J."/>
            <person name="Samudrala R."/>
            <person name="Wang J."/>
            <person name="Wong G.K.-S."/>
            <person name="Yang H."/>
        </authorList>
    </citation>
    <scope>NUCLEOTIDE SEQUENCE [LARGE SCALE GENOMIC DNA]</scope>
    <source>
        <strain>cv. Nipponbare</strain>
    </source>
</reference>
<reference key="8">
    <citation type="submission" date="2006-10" db="EMBL/GenBank/DDBJ databases">
        <title>Oryza sativa full length cDNA.</title>
        <authorList>
            <consortium name="The rice full-length cDNA consortium"/>
        </authorList>
    </citation>
    <scope>NUCLEOTIDE SEQUENCE [LARGE SCALE MRNA]</scope>
    <source>
        <strain>cv. Nipponbare</strain>
    </source>
</reference>
<reference key="9">
    <citation type="journal article" date="2005" name="Plant J.">
        <title>Severe reduction in growth rate and grain filling of rice mutants lacking OsGS1;1, a cytosolic glutamine synthetase1;1.</title>
        <authorList>
            <person name="Tabuchi M."/>
            <person name="Sugiyama K."/>
            <person name="Ishiyama K."/>
            <person name="Inoue E."/>
            <person name="Sato T."/>
            <person name="Takahashi H."/>
            <person name="Yamaya T."/>
        </authorList>
    </citation>
    <scope>TISSUE SPECIFICITY</scope>
</reference>
<reference key="10">
    <citation type="journal article" date="2007" name="J. Exp. Bot.">
        <title>Assimilation of ammonium ions and reutilization of nitrogen in rice (Oryza sativa L.).</title>
        <authorList>
            <person name="Tabuchi M."/>
            <person name="Abiko T."/>
            <person name="Yamaya T."/>
        </authorList>
    </citation>
    <scope>INDUCTION</scope>
</reference>
<reference key="11">
    <citation type="journal article" date="2013" name="Plant Cell Physiol.">
        <title>Cytosolic glutamine synthetase1;2 is responsible for the primary assimilation of ammonium in rice roots.</title>
        <authorList>
            <person name="Funayama K."/>
            <person name="Kojima S."/>
            <person name="Tabuchi-Kobayashi M."/>
            <person name="Sawa Y."/>
            <person name="Nakayama Y."/>
            <person name="Hayakawa T."/>
            <person name="Yamaya T."/>
        </authorList>
    </citation>
    <scope>FUNCTION</scope>
    <scope>DISRUPTION PHENOTYPE</scope>
</reference>
<reference key="12">
    <citation type="journal article" date="2014" name="PLoS ONE">
        <title>Accumulated expression level of cytosolic glutamine synthetase 1 gene (OsGS1;1 or OsGS1;2) alter plant development and the carbon-nitrogen metabolic status in rice.</title>
        <authorList>
            <person name="Bao A."/>
            <person name="Zhao Z."/>
            <person name="Ding G."/>
            <person name="Shi L."/>
            <person name="Xu F."/>
            <person name="Cai H."/>
        </authorList>
    </citation>
    <scope>FUNCTION</scope>
</reference>
<reference key="13">
    <citation type="journal article" date="2015" name="Plant J.">
        <title>Lack of cytosolic glutamine synthetase1;2 in vascular tissues of axillary buds causes severe reduction in their outgrowth and disorder of metabolic balance in rice seedlings.</title>
        <authorList>
            <person name="Ohashi M."/>
            <person name="Ishiyama K."/>
            <person name="Kusano M."/>
            <person name="Fukushima A."/>
            <person name="Kojima S."/>
            <person name="Hanada A."/>
            <person name="Kanno K."/>
            <person name="Hayakawa T."/>
            <person name="Seto Y."/>
            <person name="Kyozuka J."/>
            <person name="Yamaguchi S."/>
            <person name="Yamaya T."/>
        </authorList>
    </citation>
    <scope>FUNCTION</scope>
</reference>
<reference key="14">
    <citation type="journal article" date="2017" name="Plant Cell Physiol.">
        <title>Lack of cytosolic glutamine synthetase1;2 activity reduces nitrogen-dependent biosynthesis of cytokinin required for axillary bud outgrowth in rice seedlings.</title>
        <authorList>
            <person name="Ohashi M."/>
            <person name="Ishiyama K."/>
            <person name="Kojima S."/>
            <person name="Kojima M."/>
            <person name="Sakakibara H."/>
            <person name="Yamaya T."/>
            <person name="Hayakawa T."/>
        </authorList>
    </citation>
    <scope>FUNCTION</scope>
</reference>
<organism>
    <name type="scientific">Oryza sativa subsp. japonica</name>
    <name type="common">Rice</name>
    <dbReference type="NCBI Taxonomy" id="39947"/>
    <lineage>
        <taxon>Eukaryota</taxon>
        <taxon>Viridiplantae</taxon>
        <taxon>Streptophyta</taxon>
        <taxon>Embryophyta</taxon>
        <taxon>Tracheophyta</taxon>
        <taxon>Spermatophyta</taxon>
        <taxon>Magnoliopsida</taxon>
        <taxon>Liliopsida</taxon>
        <taxon>Poales</taxon>
        <taxon>Poaceae</taxon>
        <taxon>BOP clade</taxon>
        <taxon>Oryzoideae</taxon>
        <taxon>Oryzeae</taxon>
        <taxon>Oryzinae</taxon>
        <taxon>Oryza</taxon>
        <taxon>Oryza sativa</taxon>
    </lineage>
</organism>
<gene>
    <name evidence="13" type="primary">GLN1-2</name>
    <name type="synonym">GSR</name>
    <name evidence="12" type="synonym">RGS8</name>
    <name evidence="18" type="ordered locus">Os03g0223400</name>
    <name evidence="16" type="ordered locus">LOC_Os03g12290</name>
    <name evidence="15" type="ORF">OJ1743A09.19</name>
    <name evidence="19" type="ORF">OsJ_09974</name>
</gene>
<proteinExistence type="evidence at protein level"/>
<feature type="chain" id="PRO_0000153186" description="Glutamine synthetase cytosolic isozyme 1-2">
    <location>
        <begin position="1"/>
        <end position="357"/>
    </location>
</feature>
<feature type="domain" description="GS beta-grasp" evidence="2">
    <location>
        <begin position="19"/>
        <end position="99"/>
    </location>
</feature>
<feature type="domain" description="GS catalytic" evidence="3">
    <location>
        <begin position="106"/>
        <end position="357"/>
    </location>
</feature>
<dbReference type="EC" id="6.3.1.2" evidence="4"/>
<dbReference type="EMBL" id="X14244">
    <property type="protein sequence ID" value="CAA32460.1"/>
    <property type="molecule type" value="mRNA"/>
</dbReference>
<dbReference type="EMBL" id="AB180688">
    <property type="protein sequence ID" value="BAD77931.1"/>
    <property type="molecule type" value="mRNA"/>
</dbReference>
<dbReference type="EMBL" id="AC105364">
    <property type="protein sequence ID" value="AAN05339.1"/>
    <property type="status" value="ALT_SEQ"/>
    <property type="molecule type" value="Genomic_DNA"/>
</dbReference>
<dbReference type="EMBL" id="DP000009">
    <property type="protein sequence ID" value="ABF94717.1"/>
    <property type="molecule type" value="Genomic_DNA"/>
</dbReference>
<dbReference type="EMBL" id="AP008209">
    <property type="protein sequence ID" value="BAF11338.1"/>
    <property type="molecule type" value="Genomic_DNA"/>
</dbReference>
<dbReference type="EMBL" id="AP014959">
    <property type="protein sequence ID" value="BAS83037.1"/>
    <property type="molecule type" value="Genomic_DNA"/>
</dbReference>
<dbReference type="EMBL" id="CM000140">
    <property type="protein sequence ID" value="EEE58620.1"/>
    <property type="molecule type" value="Genomic_DNA"/>
</dbReference>
<dbReference type="EMBL" id="AK243037">
    <property type="protein sequence ID" value="BAH01417.1"/>
    <property type="molecule type" value="mRNA"/>
</dbReference>
<dbReference type="PIR" id="S07469">
    <property type="entry name" value="AJRZQB"/>
</dbReference>
<dbReference type="RefSeq" id="XP_015631679.1">
    <property type="nucleotide sequence ID" value="XM_015776193.1"/>
</dbReference>
<dbReference type="SMR" id="P14654"/>
<dbReference type="FunCoup" id="P14654">
    <property type="interactions" value="1898"/>
</dbReference>
<dbReference type="STRING" id="39947.P14654"/>
<dbReference type="PaxDb" id="39947-P14654"/>
<dbReference type="EnsemblPlants" id="Os03t0223400-01">
    <property type="protein sequence ID" value="Os03t0223400-01"/>
    <property type="gene ID" value="Os03g0223400"/>
</dbReference>
<dbReference type="Gramene" id="Os03t0223400-01">
    <property type="protein sequence ID" value="Os03t0223400-01"/>
    <property type="gene ID" value="Os03g0223400"/>
</dbReference>
<dbReference type="KEGG" id="dosa:Os03g0223400"/>
<dbReference type="eggNOG" id="KOG0683">
    <property type="taxonomic scope" value="Eukaryota"/>
</dbReference>
<dbReference type="HOGENOM" id="CLU_036762_0_1_1"/>
<dbReference type="InParanoid" id="P14654"/>
<dbReference type="OMA" id="TKDYADH"/>
<dbReference type="OrthoDB" id="1936100at2759"/>
<dbReference type="BRENDA" id="6.3.1.2">
    <property type="organism ID" value="8948"/>
</dbReference>
<dbReference type="PlantReactome" id="R-OSA-1119291">
    <property type="pathway name" value="Nitrate assimilation"/>
</dbReference>
<dbReference type="PlantReactome" id="R-OSA-1119293">
    <property type="pathway name" value="Glutamine biosynthesis I"/>
</dbReference>
<dbReference type="PlantReactome" id="R-OSA-1119443">
    <property type="pathway name" value="Ammonia assimilation cycle"/>
</dbReference>
<dbReference type="SABIO-RK" id="P14654"/>
<dbReference type="Proteomes" id="UP000000763">
    <property type="component" value="Chromosome 3"/>
</dbReference>
<dbReference type="Proteomes" id="UP000007752">
    <property type="component" value="Chromosome 3"/>
</dbReference>
<dbReference type="Proteomes" id="UP000059680">
    <property type="component" value="Chromosome 3"/>
</dbReference>
<dbReference type="GO" id="GO:0005737">
    <property type="term" value="C:cytoplasm"/>
    <property type="evidence" value="ECO:0000318"/>
    <property type="project" value="GO_Central"/>
</dbReference>
<dbReference type="GO" id="GO:0005524">
    <property type="term" value="F:ATP binding"/>
    <property type="evidence" value="ECO:0007669"/>
    <property type="project" value="UniProtKB-KW"/>
</dbReference>
<dbReference type="GO" id="GO:0004356">
    <property type="term" value="F:glutamine synthetase activity"/>
    <property type="evidence" value="ECO:0000318"/>
    <property type="project" value="GO_Central"/>
</dbReference>
<dbReference type="GO" id="GO:0006542">
    <property type="term" value="P:glutamine biosynthetic process"/>
    <property type="evidence" value="ECO:0000318"/>
    <property type="project" value="GO_Central"/>
</dbReference>
<dbReference type="FunFam" id="3.30.590.10:FF:000004">
    <property type="entry name" value="Glutamine synthetase"/>
    <property type="match status" value="1"/>
</dbReference>
<dbReference type="FunFam" id="3.10.20.70:FF:000003">
    <property type="entry name" value="Glutamine synthetase, chloroplastic"/>
    <property type="match status" value="1"/>
</dbReference>
<dbReference type="Gene3D" id="3.10.20.70">
    <property type="entry name" value="Glutamine synthetase, N-terminal domain"/>
    <property type="match status" value="1"/>
</dbReference>
<dbReference type="Gene3D" id="3.30.590.10">
    <property type="entry name" value="Glutamine synthetase/guanido kinase, catalytic domain"/>
    <property type="match status" value="1"/>
</dbReference>
<dbReference type="InterPro" id="IPR008147">
    <property type="entry name" value="Gln_synt_N"/>
</dbReference>
<dbReference type="InterPro" id="IPR036651">
    <property type="entry name" value="Gln_synt_N_sf"/>
</dbReference>
<dbReference type="InterPro" id="IPR014746">
    <property type="entry name" value="Gln_synth/guanido_kin_cat_dom"/>
</dbReference>
<dbReference type="InterPro" id="IPR008146">
    <property type="entry name" value="Gln_synth_cat_dom"/>
</dbReference>
<dbReference type="InterPro" id="IPR027303">
    <property type="entry name" value="Gln_synth_gly_rich_site"/>
</dbReference>
<dbReference type="InterPro" id="IPR027302">
    <property type="entry name" value="Gln_synth_N_conserv_site"/>
</dbReference>
<dbReference type="InterPro" id="IPR050292">
    <property type="entry name" value="Glutamine_Synthetase"/>
</dbReference>
<dbReference type="PANTHER" id="PTHR20852">
    <property type="entry name" value="GLUTAMINE SYNTHETASE"/>
    <property type="match status" value="1"/>
</dbReference>
<dbReference type="PANTHER" id="PTHR20852:SF109">
    <property type="entry name" value="GLUTAMINE SYNTHETASE CYTOSOLIC ISOZYME 1-2"/>
    <property type="match status" value="1"/>
</dbReference>
<dbReference type="Pfam" id="PF00120">
    <property type="entry name" value="Gln-synt_C"/>
    <property type="match status" value="1"/>
</dbReference>
<dbReference type="Pfam" id="PF03951">
    <property type="entry name" value="Gln-synt_N"/>
    <property type="match status" value="1"/>
</dbReference>
<dbReference type="SMART" id="SM01230">
    <property type="entry name" value="Gln-synt_C"/>
    <property type="match status" value="1"/>
</dbReference>
<dbReference type="SUPFAM" id="SSF54368">
    <property type="entry name" value="Glutamine synthetase, N-terminal domain"/>
    <property type="match status" value="1"/>
</dbReference>
<dbReference type="SUPFAM" id="SSF55931">
    <property type="entry name" value="Glutamine synthetase/guanido kinase"/>
    <property type="match status" value="1"/>
</dbReference>
<dbReference type="PROSITE" id="PS00180">
    <property type="entry name" value="GLNA_1"/>
    <property type="match status" value="1"/>
</dbReference>
<dbReference type="PROSITE" id="PS00181">
    <property type="entry name" value="GLNA_ATP"/>
    <property type="match status" value="1"/>
</dbReference>
<dbReference type="PROSITE" id="PS51986">
    <property type="entry name" value="GS_BETA_GRASP"/>
    <property type="match status" value="1"/>
</dbReference>
<dbReference type="PROSITE" id="PS51987">
    <property type="entry name" value="GS_CATALYTIC"/>
    <property type="match status" value="1"/>
</dbReference>
<sequence length="357" mass="39258">MANLTDLVNLNLSDCSDKIIAEYIWVGGSGIDLRSKARTVKGPITDVSQLPKWNYDGSSTGQAPGEDSEVILYPQAIFKDPFRRGDNILVMCDCYTPQGEPIPTNKRHSAAKIFSHPDVVAEVPWYGIEQEYTLLQKDVNWPLGWPVGGFPGPQGPYYCAAGAEKAFGRDIVDAHYKACIYAGINISGINGEVMPGQWEFQVGPSVGIAAADQVWVARYILERVTEVAGVVLSLDPKPIPGDWNGAGAHTNFSTKSMREPGGYEVIKKAIDKLALRHKEHIAAYGEGNERRLTGRHETADINTFKWGVANRGASIRVGRDTEKEGKGYFEDRRPASNMDPYVVTGMIAETTLLWKQN</sequence>